<gene>
    <name type="primary">csx1</name>
    <name type="ORF">SPAC17A2.09c</name>
</gene>
<protein>
    <recommendedName>
        <fullName>RNA-binding post-transcriptional regulator csx1</fullName>
    </recommendedName>
</protein>
<organism>
    <name type="scientific">Schizosaccharomyces pombe (strain 972 / ATCC 24843)</name>
    <name type="common">Fission yeast</name>
    <dbReference type="NCBI Taxonomy" id="284812"/>
    <lineage>
        <taxon>Eukaryota</taxon>
        <taxon>Fungi</taxon>
        <taxon>Dikarya</taxon>
        <taxon>Ascomycota</taxon>
        <taxon>Taphrinomycotina</taxon>
        <taxon>Schizosaccharomycetes</taxon>
        <taxon>Schizosaccharomycetales</taxon>
        <taxon>Schizosaccharomycetaceae</taxon>
        <taxon>Schizosaccharomyces</taxon>
    </lineage>
</organism>
<feature type="chain" id="PRO_0000081536" description="RNA-binding post-transcriptional regulator csx1">
    <location>
        <begin position="1"/>
        <end position="632"/>
    </location>
</feature>
<feature type="domain" description="RRM 1" evidence="1">
    <location>
        <begin position="85"/>
        <end position="167"/>
    </location>
</feature>
<feature type="domain" description="RRM 2" evidence="1">
    <location>
        <begin position="182"/>
        <end position="261"/>
    </location>
</feature>
<feature type="domain" description="RRM 3" evidence="1">
    <location>
        <begin position="297"/>
        <end position="369"/>
    </location>
</feature>
<feature type="region of interest" description="Disordered" evidence="2">
    <location>
        <begin position="456"/>
        <end position="476"/>
    </location>
</feature>
<feature type="compositionally biased region" description="Low complexity" evidence="2">
    <location>
        <begin position="466"/>
        <end position="476"/>
    </location>
</feature>
<feature type="modified residue" description="Phosphoserine; by MAPK sty1" evidence="3 6">
    <location>
        <position position="42"/>
    </location>
</feature>
<feature type="modified residue" description="Phosphoserine; by MAPK sty1" evidence="3 6">
    <location>
        <position position="54"/>
    </location>
</feature>
<feature type="modified residue" description="Phosphoserine" evidence="6">
    <location>
        <position position="67"/>
    </location>
</feature>
<feature type="modified residue" description="Phosphoserine" evidence="6">
    <location>
        <position position="69"/>
    </location>
</feature>
<feature type="modified residue" description="Phosphoserine; by MAPK sty1" evidence="3">
    <location>
        <position position="291"/>
    </location>
</feature>
<feature type="modified residue" description="Phosphoserine; by MAPK sty1" evidence="3">
    <location>
        <position position="455"/>
    </location>
</feature>
<feature type="sequence conflict" description="In Ref. 2." evidence="7" ref="2">
    <original>A</original>
    <variation>G</variation>
    <location>
        <position position="265"/>
    </location>
</feature>
<feature type="sequence conflict" description="In Ref. 2; BAA11919." evidence="7" ref="2">
    <original>D</original>
    <variation>E</variation>
    <location>
        <position position="270"/>
    </location>
</feature>
<feature type="sequence conflict" description="In Ref. 2; BAA11919." evidence="7" ref="2">
    <original>L</original>
    <variation>R</variation>
    <location>
        <position position="273"/>
    </location>
</feature>
<feature type="sequence conflict" description="In Ref. 2." evidence="7" ref="2">
    <original>VSDEGFDRTLS</original>
    <variation>FQMRVRKNSFR</variation>
    <location>
        <begin position="383"/>
        <end position="393"/>
    </location>
</feature>
<name>CSX1_SCHPO</name>
<proteinExistence type="evidence at protein level"/>
<comment type="function">
    <text evidence="3">Regulates global gene expression after oxidative stress. Interacts and stabilizes atf1 and pcr1 mRNAs after oxidative stress, thus controlling their turnover.</text>
</comment>
<comment type="subunit">
    <text evidence="4">Interacts with cip1 and cip2.</text>
</comment>
<comment type="interaction">
    <interactant intactId="EBI-1562021">
        <id>O13759</id>
    </interactant>
    <interactant intactId="EBI-7486409">
        <id>Q10156</id>
        <label>lkh1</label>
    </interactant>
    <organismsDiffer>false</organismsDiffer>
    <experiments>3</experiments>
</comment>
<comment type="subcellular location">
    <subcellularLocation>
        <location evidence="3 5">Cytoplasm</location>
    </subcellularLocation>
</comment>
<accession>O13759</accession>
<accession>Q09331</accession>
<accession>Q09335</accession>
<keyword id="KW-0963">Cytoplasm</keyword>
<keyword id="KW-0903">Direct protein sequencing</keyword>
<keyword id="KW-0597">Phosphoprotein</keyword>
<keyword id="KW-1185">Reference proteome</keyword>
<keyword id="KW-0677">Repeat</keyword>
<keyword id="KW-0694">RNA-binding</keyword>
<reference key="1">
    <citation type="journal article" date="2002" name="Nature">
        <title>The genome sequence of Schizosaccharomyces pombe.</title>
        <authorList>
            <person name="Wood V."/>
            <person name="Gwilliam R."/>
            <person name="Rajandream M.A."/>
            <person name="Lyne M.H."/>
            <person name="Lyne R."/>
            <person name="Stewart A."/>
            <person name="Sgouros J.G."/>
            <person name="Peat N."/>
            <person name="Hayles J."/>
            <person name="Baker S.G."/>
            <person name="Basham D."/>
            <person name="Bowman S."/>
            <person name="Brooks K."/>
            <person name="Brown D."/>
            <person name="Brown S."/>
            <person name="Chillingworth T."/>
            <person name="Churcher C.M."/>
            <person name="Collins M."/>
            <person name="Connor R."/>
            <person name="Cronin A."/>
            <person name="Davis P."/>
            <person name="Feltwell T."/>
            <person name="Fraser A."/>
            <person name="Gentles S."/>
            <person name="Goble A."/>
            <person name="Hamlin N."/>
            <person name="Harris D.E."/>
            <person name="Hidalgo J."/>
            <person name="Hodgson G."/>
            <person name="Holroyd S."/>
            <person name="Hornsby T."/>
            <person name="Howarth S."/>
            <person name="Huckle E.J."/>
            <person name="Hunt S."/>
            <person name="Jagels K."/>
            <person name="James K.D."/>
            <person name="Jones L."/>
            <person name="Jones M."/>
            <person name="Leather S."/>
            <person name="McDonald S."/>
            <person name="McLean J."/>
            <person name="Mooney P."/>
            <person name="Moule S."/>
            <person name="Mungall K.L."/>
            <person name="Murphy L.D."/>
            <person name="Niblett D."/>
            <person name="Odell C."/>
            <person name="Oliver K."/>
            <person name="O'Neil S."/>
            <person name="Pearson D."/>
            <person name="Quail M.A."/>
            <person name="Rabbinowitsch E."/>
            <person name="Rutherford K.M."/>
            <person name="Rutter S."/>
            <person name="Saunders D."/>
            <person name="Seeger K."/>
            <person name="Sharp S."/>
            <person name="Skelton J."/>
            <person name="Simmonds M.N."/>
            <person name="Squares R."/>
            <person name="Squares S."/>
            <person name="Stevens K."/>
            <person name="Taylor K."/>
            <person name="Taylor R.G."/>
            <person name="Tivey A."/>
            <person name="Walsh S.V."/>
            <person name="Warren T."/>
            <person name="Whitehead S."/>
            <person name="Woodward J.R."/>
            <person name="Volckaert G."/>
            <person name="Aert R."/>
            <person name="Robben J."/>
            <person name="Grymonprez B."/>
            <person name="Weltjens I."/>
            <person name="Vanstreels E."/>
            <person name="Rieger M."/>
            <person name="Schaefer M."/>
            <person name="Mueller-Auer S."/>
            <person name="Gabel C."/>
            <person name="Fuchs M."/>
            <person name="Duesterhoeft A."/>
            <person name="Fritzc C."/>
            <person name="Holzer E."/>
            <person name="Moestl D."/>
            <person name="Hilbert H."/>
            <person name="Borzym K."/>
            <person name="Langer I."/>
            <person name="Beck A."/>
            <person name="Lehrach H."/>
            <person name="Reinhardt R."/>
            <person name="Pohl T.M."/>
            <person name="Eger P."/>
            <person name="Zimmermann W."/>
            <person name="Wedler H."/>
            <person name="Wambutt R."/>
            <person name="Purnelle B."/>
            <person name="Goffeau A."/>
            <person name="Cadieu E."/>
            <person name="Dreano S."/>
            <person name="Gloux S."/>
            <person name="Lelaure V."/>
            <person name="Mottier S."/>
            <person name="Galibert F."/>
            <person name="Aves S.J."/>
            <person name="Xiang Z."/>
            <person name="Hunt C."/>
            <person name="Moore K."/>
            <person name="Hurst S.M."/>
            <person name="Lucas M."/>
            <person name="Rochet M."/>
            <person name="Gaillardin C."/>
            <person name="Tallada V.A."/>
            <person name="Garzon A."/>
            <person name="Thode G."/>
            <person name="Daga R.R."/>
            <person name="Cruzado L."/>
            <person name="Jimenez J."/>
            <person name="Sanchez M."/>
            <person name="del Rey F."/>
            <person name="Benito J."/>
            <person name="Dominguez A."/>
            <person name="Revuelta J.L."/>
            <person name="Moreno S."/>
            <person name="Armstrong J."/>
            <person name="Forsburg S.L."/>
            <person name="Cerutti L."/>
            <person name="Lowe T."/>
            <person name="McCombie W.R."/>
            <person name="Paulsen I."/>
            <person name="Potashkin J."/>
            <person name="Shpakovski G.V."/>
            <person name="Ussery D."/>
            <person name="Barrell B.G."/>
            <person name="Nurse P."/>
        </authorList>
    </citation>
    <scope>NUCLEOTIDE SEQUENCE [LARGE SCALE GENOMIC DNA]</scope>
    <source>
        <strain>972 / ATCC 24843</strain>
    </source>
</reference>
<reference key="2">
    <citation type="journal article" date="1996" name="J. Cell Biol.">
        <title>Aberrant mitosis in fission yeast mutants defective in fatty acid synthetase and acetyl CoA carboxylase.</title>
        <authorList>
            <person name="Saitoh S."/>
            <person name="Takahashi K."/>
            <person name="Nabeshima K."/>
            <person name="Yamashita Y."/>
            <person name="Nakaseko Y."/>
            <person name="Hirata A."/>
            <person name="Yanagida M."/>
        </authorList>
    </citation>
    <scope>NUCLEOTIDE SEQUENCE [GENOMIC DNA] OF 161-393</scope>
</reference>
<reference key="3">
    <citation type="journal article" date="2006" name="Mol. Biol. Cell">
        <title>Cip1 and Cip2 are novel RNA-recognition-motif proteins that counteract Csx1 function during oxidative stress.</title>
        <authorList>
            <person name="Martin V."/>
            <person name="Rodriguez-Gabriel M.A."/>
            <person name="McDonald W.H."/>
            <person name="Watt S."/>
            <person name="Yates J.R. III"/>
            <person name="Baehler J."/>
            <person name="Russell P."/>
        </authorList>
    </citation>
    <scope>PARTIAL PROTEIN SEQUENCE</scope>
    <scope>INTERACTION WITH CIP1 AND CIP2</scope>
</reference>
<reference key="4">
    <citation type="journal article" date="2003" name="EMBO J.">
        <title>RNA-binding protein Csx1 mediates global control of gene expression in response to oxidative stress.</title>
        <authorList>
            <person name="Rodriguez-Gabriel M.A."/>
            <person name="Burns G."/>
            <person name="McDonald W.H."/>
            <person name="Martin V."/>
            <person name="Yates J.R. III"/>
            <person name="Baehler J."/>
            <person name="Russell P."/>
        </authorList>
    </citation>
    <scope>FUNCTION</scope>
    <scope>SUBCELLULAR LOCATION</scope>
    <scope>PHOSPHORYLATION AT SER-42; SER-54; SER-291 AND SER-455</scope>
</reference>
<reference key="5">
    <citation type="journal article" date="2006" name="Nat. Biotechnol.">
        <title>ORFeome cloning and global analysis of protein localization in the fission yeast Schizosaccharomyces pombe.</title>
        <authorList>
            <person name="Matsuyama A."/>
            <person name="Arai R."/>
            <person name="Yashiroda Y."/>
            <person name="Shirai A."/>
            <person name="Kamata A."/>
            <person name="Sekido S."/>
            <person name="Kobayashi Y."/>
            <person name="Hashimoto A."/>
            <person name="Hamamoto M."/>
            <person name="Hiraoka Y."/>
            <person name="Horinouchi S."/>
            <person name="Yoshida M."/>
        </authorList>
    </citation>
    <scope>SUBCELLULAR LOCATION [LARGE SCALE ANALYSIS]</scope>
</reference>
<reference key="6">
    <citation type="journal article" date="2008" name="J. Proteome Res.">
        <title>Phosphoproteome analysis of fission yeast.</title>
        <authorList>
            <person name="Wilson-Grady J.T."/>
            <person name="Villen J."/>
            <person name="Gygi S.P."/>
        </authorList>
    </citation>
    <scope>PHOSPHORYLATION [LARGE SCALE ANALYSIS] AT SER-42; SER-54; SER-67 AND SER-69</scope>
    <scope>IDENTIFICATION BY MASS SPECTROMETRY</scope>
</reference>
<sequence length="632" mass="67870">MSIDCLYRRSSLFDTSFVPLHSSIPATSKMSASNSDVNAPISPVVDEGKSELVSPTLERLVAPFNCSPSSTPLQDVAGVGSKMSDTLWMGDLEPWMDATFIQQLWASLNEPVNVKVMRSKASSSETLISYCFVQFSSSAAAERALMKYNNTMIPGAHCTFKLNWATGGGIQHNNFVSRDPEFSIFVGDLLPTTEDSDLFMTFRSIYPSCTSAKIIVDPVTGLSRKYGFVRFSSEKEQQHALMHMQGYLCQGRPLRISVASPKSRASIAADSALGIVPTSTSNRQPNQDLCSMDPLNTTVFVGGLASNLSEKDLQVCFQPFGRILNIKIPFGKGCGFVQYSEKSAAEKAINTMQGALVGTSHIRLAWGHNTLPVSALSQSQSQVSDEGFDRTLSANQIFGMNQSVIGANSGSSNSSGSSLKSAPVSPRTAAAQSLLPNSVVSSINGMNSVNFSTISPPPLSRSASISPTLSGSGSGLTPLSSHFPSAATGLVGGQVYPQSSVLQSSKINGSAKVQPSVKLPEWLQPFSGNNHNSFATQDLLTRVSSLKLVDDEQPASLNGSAFQARASRPWNLGRERQSSLIDLRHELEQNENGLEKSGFGLNLRGRLPPRSYSTFNCTGQYLQPSLRLSRDS</sequence>
<evidence type="ECO:0000255" key="1">
    <source>
        <dbReference type="PROSITE-ProRule" id="PRU00176"/>
    </source>
</evidence>
<evidence type="ECO:0000256" key="2">
    <source>
        <dbReference type="SAM" id="MobiDB-lite"/>
    </source>
</evidence>
<evidence type="ECO:0000269" key="3">
    <source>
    </source>
</evidence>
<evidence type="ECO:0000269" key="4">
    <source>
    </source>
</evidence>
<evidence type="ECO:0000269" key="5">
    <source>
    </source>
</evidence>
<evidence type="ECO:0000269" key="6">
    <source>
    </source>
</evidence>
<evidence type="ECO:0000305" key="7"/>
<dbReference type="EMBL" id="CU329670">
    <property type="protein sequence ID" value="CAB16569.1"/>
    <property type="molecule type" value="Genomic_DNA"/>
</dbReference>
<dbReference type="EMBL" id="D83417">
    <property type="protein sequence ID" value="BAA11918.1"/>
    <property type="molecule type" value="Genomic_DNA"/>
</dbReference>
<dbReference type="EMBL" id="D83418">
    <property type="protein sequence ID" value="BAA11919.1"/>
    <property type="molecule type" value="Genomic_DNA"/>
</dbReference>
<dbReference type="PIR" id="T37810">
    <property type="entry name" value="T37810"/>
</dbReference>
<dbReference type="RefSeq" id="NP_594243.1">
    <property type="nucleotide sequence ID" value="NM_001019666.2"/>
</dbReference>
<dbReference type="SMR" id="O13759"/>
<dbReference type="BioGRID" id="278627">
    <property type="interactions" value="11"/>
</dbReference>
<dbReference type="FunCoup" id="O13759">
    <property type="interactions" value="263"/>
</dbReference>
<dbReference type="IntAct" id="O13759">
    <property type="interactions" value="3"/>
</dbReference>
<dbReference type="MINT" id="O13759"/>
<dbReference type="STRING" id="284812.O13759"/>
<dbReference type="iPTMnet" id="O13759"/>
<dbReference type="PaxDb" id="4896-SPAC17A2.09c.1"/>
<dbReference type="EnsemblFungi" id="SPAC17A2.09c.1">
    <property type="protein sequence ID" value="SPAC17A2.09c.1:pep"/>
    <property type="gene ID" value="SPAC17A2.09c"/>
</dbReference>
<dbReference type="GeneID" id="2542151"/>
<dbReference type="KEGG" id="spo:2542151"/>
<dbReference type="PomBase" id="SPAC17A2.09c">
    <property type="gene designation" value="csx1"/>
</dbReference>
<dbReference type="VEuPathDB" id="FungiDB:SPAC17A2.09c"/>
<dbReference type="eggNOG" id="KOG0118">
    <property type="taxonomic scope" value="Eukaryota"/>
</dbReference>
<dbReference type="HOGENOM" id="CLU_446298_0_0_1"/>
<dbReference type="InParanoid" id="O13759"/>
<dbReference type="OMA" id="HMQGYLC"/>
<dbReference type="CD-CODE" id="F5301D48">
    <property type="entry name" value="Stress granule"/>
</dbReference>
<dbReference type="PRO" id="PR:O13759"/>
<dbReference type="Proteomes" id="UP000002485">
    <property type="component" value="Chromosome I"/>
</dbReference>
<dbReference type="GO" id="GO:0005737">
    <property type="term" value="C:cytoplasm"/>
    <property type="evidence" value="ECO:0000314"/>
    <property type="project" value="PomBase"/>
</dbReference>
<dbReference type="GO" id="GO:0010494">
    <property type="term" value="C:cytoplasmic stress granule"/>
    <property type="evidence" value="ECO:0000314"/>
    <property type="project" value="PomBase"/>
</dbReference>
<dbReference type="GO" id="GO:0005829">
    <property type="term" value="C:cytosol"/>
    <property type="evidence" value="ECO:0007005"/>
    <property type="project" value="PomBase"/>
</dbReference>
<dbReference type="GO" id="GO:1990904">
    <property type="term" value="C:ribonucleoprotein complex"/>
    <property type="evidence" value="ECO:0000318"/>
    <property type="project" value="GO_Central"/>
</dbReference>
<dbReference type="GO" id="GO:0003729">
    <property type="term" value="F:mRNA binding"/>
    <property type="evidence" value="ECO:0000314"/>
    <property type="project" value="PomBase"/>
</dbReference>
<dbReference type="GO" id="GO:0003723">
    <property type="term" value="F:RNA binding"/>
    <property type="evidence" value="ECO:0000318"/>
    <property type="project" value="GO_Central"/>
</dbReference>
<dbReference type="GO" id="GO:0070935">
    <property type="term" value="P:3'-UTR-mediated mRNA stabilization"/>
    <property type="evidence" value="ECO:0000315"/>
    <property type="project" value="PomBase"/>
</dbReference>
<dbReference type="GO" id="GO:0034599">
    <property type="term" value="P:cellular response to oxidative stress"/>
    <property type="evidence" value="ECO:0000315"/>
    <property type="project" value="PomBase"/>
</dbReference>
<dbReference type="GO" id="GO:0010628">
    <property type="term" value="P:positive regulation of gene expression"/>
    <property type="evidence" value="ECO:0000269"/>
    <property type="project" value="PomBase"/>
</dbReference>
<dbReference type="GO" id="GO:2000815">
    <property type="term" value="P:regulation of mRNA stability involved in response to oxidative stress"/>
    <property type="evidence" value="ECO:0000315"/>
    <property type="project" value="PomBase"/>
</dbReference>
<dbReference type="CDD" id="cd12611">
    <property type="entry name" value="RRM1_NGR1_NAM8_like"/>
    <property type="match status" value="1"/>
</dbReference>
<dbReference type="CDD" id="cd12613">
    <property type="entry name" value="RRM2_NGR1_NAM8_like"/>
    <property type="match status" value="1"/>
</dbReference>
<dbReference type="CDD" id="cd12346">
    <property type="entry name" value="RRM3_NGR1_NAM8_like"/>
    <property type="match status" value="1"/>
</dbReference>
<dbReference type="FunFam" id="3.30.70.330:FF:000405">
    <property type="entry name" value="polyadenylate-binding protein RBP45"/>
    <property type="match status" value="1"/>
</dbReference>
<dbReference type="Gene3D" id="3.30.70.330">
    <property type="match status" value="3"/>
</dbReference>
<dbReference type="InterPro" id="IPR012677">
    <property type="entry name" value="Nucleotide-bd_a/b_plait_sf"/>
</dbReference>
<dbReference type="InterPro" id="IPR035979">
    <property type="entry name" value="RBD_domain_sf"/>
</dbReference>
<dbReference type="InterPro" id="IPR050825">
    <property type="entry name" value="RBM42_RBP45_47-like"/>
</dbReference>
<dbReference type="InterPro" id="IPR000504">
    <property type="entry name" value="RRM_dom"/>
</dbReference>
<dbReference type="PANTHER" id="PTHR47640:SF16">
    <property type="entry name" value="POLYADENYLATE-BINDING PROTEIN RBP47C-RELATED"/>
    <property type="match status" value="1"/>
</dbReference>
<dbReference type="PANTHER" id="PTHR47640">
    <property type="entry name" value="TRNA SELENOCYSTEINE 1-ASSOCIATED PROTEIN 1-RELATED-RELATED"/>
    <property type="match status" value="1"/>
</dbReference>
<dbReference type="Pfam" id="PF00076">
    <property type="entry name" value="RRM_1"/>
    <property type="match status" value="2"/>
</dbReference>
<dbReference type="SMART" id="SM00360">
    <property type="entry name" value="RRM"/>
    <property type="match status" value="3"/>
</dbReference>
<dbReference type="SUPFAM" id="SSF54928">
    <property type="entry name" value="RNA-binding domain, RBD"/>
    <property type="match status" value="3"/>
</dbReference>
<dbReference type="PROSITE" id="PS50102">
    <property type="entry name" value="RRM"/>
    <property type="match status" value="3"/>
</dbReference>